<sequence length="380" mass="38952">MPIKSFASRLALSLAICGTAMGQKVNGADYNKPDGGPPAKFFQASSSIPVAAIQAAAAKASKVPSHATYPIGQGSTKSTIHSDWAGFSEGAAFSFIADMDVDCDGLNHGCKGNPDGQKETNWGALSAYEVPFIVIPQEFLDANKGTLKGNAVAAVICNGKMFYGIFGDSNGDSPQVTGEASWLMARTCFPKEDLNGNKGHTAADVTYIVFTGDKAVLPSSALNKNYITNFDTLRSMGDSLVGALAKNLNLGGGGGNPPTTLTTTSIPEPTGGSGSCSWPGHCAGATCSSNDDCSDDLTCQNGKCASDGSAETCSWEGHCKGATCSSNDDCSDELACISGICSVDNGVETCEWEGHCEGASCSSHDDCDGNLACKNGKCSA</sequence>
<proteinExistence type="evidence at protein level"/>
<evidence type="ECO:0000255" key="1"/>
<evidence type="ECO:0000269" key="2">
    <source>
    </source>
</evidence>
<evidence type="ECO:0000269" key="3">
    <source>
    </source>
</evidence>
<evidence type="ECO:0000305" key="4"/>
<dbReference type="EC" id="3.2.1.132"/>
<dbReference type="EMBL" id="AB159785">
    <property type="protein sequence ID" value="BAD08218.2"/>
    <property type="molecule type" value="Genomic_DNA"/>
</dbReference>
<dbReference type="SMR" id="Q75R32"/>
<dbReference type="CAZy" id="GH75">
    <property type="family name" value="Glycoside Hydrolase Family 75"/>
</dbReference>
<dbReference type="VEuPathDB" id="FungiDB:AO090113000063"/>
<dbReference type="eggNOG" id="ENOG502S39Y">
    <property type="taxonomic scope" value="Eukaryota"/>
</dbReference>
<dbReference type="GO" id="GO:0005576">
    <property type="term" value="C:extracellular region"/>
    <property type="evidence" value="ECO:0007669"/>
    <property type="project" value="UniProtKB-SubCell"/>
</dbReference>
<dbReference type="GO" id="GO:0016977">
    <property type="term" value="F:chitosanase activity"/>
    <property type="evidence" value="ECO:0007669"/>
    <property type="project" value="UniProtKB-EC"/>
</dbReference>
<dbReference type="GO" id="GO:0000272">
    <property type="term" value="P:polysaccharide catabolic process"/>
    <property type="evidence" value="ECO:0007669"/>
    <property type="project" value="UniProtKB-KW"/>
</dbReference>
<dbReference type="InterPro" id="IPR009939">
    <property type="entry name" value="Chitosanase_fungal"/>
</dbReference>
<dbReference type="PANTHER" id="PTHR42061">
    <property type="entry name" value="ENDO-CHITOSANASE"/>
    <property type="match status" value="1"/>
</dbReference>
<dbReference type="PANTHER" id="PTHR42061:SF4">
    <property type="entry name" value="ENDO-CHITOSANASE"/>
    <property type="match status" value="1"/>
</dbReference>
<dbReference type="Pfam" id="PF07335">
    <property type="entry name" value="Glyco_hydro_75"/>
    <property type="match status" value="1"/>
</dbReference>
<name>CSNC_ASPOZ</name>
<accession>Q75R32</accession>
<keyword id="KW-0119">Carbohydrate metabolism</keyword>
<keyword id="KW-0903">Direct protein sequencing</keyword>
<keyword id="KW-0326">Glycosidase</keyword>
<keyword id="KW-0378">Hydrolase</keyword>
<keyword id="KW-0624">Polysaccharide degradation</keyword>
<keyword id="KW-0677">Repeat</keyword>
<keyword id="KW-0964">Secreted</keyword>
<keyword id="KW-0732">Signal</keyword>
<organism>
    <name type="scientific">Aspergillus oryzae</name>
    <name type="common">Yellow koji mold</name>
    <dbReference type="NCBI Taxonomy" id="5062"/>
    <lineage>
        <taxon>Eukaryota</taxon>
        <taxon>Fungi</taxon>
        <taxon>Dikarya</taxon>
        <taxon>Ascomycota</taxon>
        <taxon>Pezizomycotina</taxon>
        <taxon>Eurotiomycetes</taxon>
        <taxon>Eurotiomycetidae</taxon>
        <taxon>Eurotiales</taxon>
        <taxon>Aspergillaceae</taxon>
        <taxon>Aspergillus</taxon>
        <taxon>Aspergillus subgen. Circumdati</taxon>
    </lineage>
</organism>
<feature type="signal peptide" evidence="1">
    <location>
        <begin position="1"/>
        <end position="22"/>
    </location>
</feature>
<feature type="chain" id="PRO_0000429639" description="Endo-chitosanase C">
    <location>
        <begin position="23"/>
        <end position="380"/>
    </location>
</feature>
<feature type="repeat" description="R3-1">
    <location>
        <begin position="276"/>
        <end position="304"/>
    </location>
</feature>
<feature type="repeat" description="R3-2">
    <location>
        <begin position="311"/>
        <end position="341"/>
    </location>
</feature>
<feature type="repeat" description="R3-3">
    <location>
        <begin position="348"/>
        <end position="378"/>
    </location>
</feature>
<comment type="function">
    <text evidence="2 3">Chitosanase catalyzing the endo-type cleavage of chitosan, the deacylated form of chitin. Chitosanase may be crucial in the degradation of the deacetylated portion of chitin in the fungal cell wall. Chitoolisaccharides produced by the hydrolysis of partially N-acetylated chitosan are known to have many biological activities, including antibacterial activity, immune-enhancing effects, and elicitor activity.</text>
</comment>
<comment type="catalytic activity">
    <reaction evidence="2 3">
        <text>Endohydrolysis of beta-(1-&gt;4)-linkages between D-glucosamine residues in a partly acetylated chitosan.</text>
        <dbReference type="EC" id="3.2.1.132"/>
    </reaction>
</comment>
<comment type="biophysicochemical properties">
    <phDependence>
        <text evidence="2">Optimum pH is 5.5.</text>
    </phDependence>
    <temperatureDependence>
        <text evidence="2">Optimum temperature is 50 degrees Celsius.</text>
    </temperatureDependence>
</comment>
<comment type="subcellular location">
    <subcellularLocation>
        <location evidence="3">Secreted</location>
    </subcellularLocation>
</comment>
<comment type="domain">
    <text evidence="3">The C-terminal R3 domain contains 3 tandem repeats required for the binding to insoluble chitosan.</text>
</comment>
<comment type="similarity">
    <text evidence="4">Belongs to the glycosyl hydrolase 75 family.</text>
</comment>
<reference key="1">
    <citation type="journal article" date="2012" name="Biosci. Biotechnol. Biochem.">
        <title>Cloning and characterization of a gene coding for a major extracellular chitosanase from the koji mold Aspergillus oryzae.</title>
        <authorList>
            <person name="Sugita A."/>
            <person name="Sugii A."/>
            <person name="Sato K."/>
            <person name="Zhang X.-Y."/>
            <person name="Dai A.-L."/>
            <person name="Taguchi G."/>
            <person name="Shimosaka M."/>
        </authorList>
    </citation>
    <scope>NUCLEOTIDE SEQUENCE [GENOMIC DNA]</scope>
    <scope>PROTEIN SEQUENCE OF 100-121 AND 185-214</scope>
    <scope>DOMAIN</scope>
    <scope>CATALYTIC ACTIVITY</scope>
    <scope>FUNCTION</scope>
    <scope>SUBCELLULAR LOCATION</scope>
    <source>
        <strain>IAM2660</strain>
    </source>
</reference>
<reference key="2">
    <citation type="journal article" date="2000" name="Biosci. Biotechnol. Biochem.">
        <title>Purification and characterization of chitosanase and Exo-beta-D-glucosaminidase from a Koji mold, Aspergillus oryzae IAM2660.</title>
        <authorList>
            <person name="Zhang X.Y."/>
            <person name="Dai A.L."/>
            <person name="Zhang X.K."/>
            <person name="Kuroiwa K."/>
            <person name="Kodaira R."/>
            <person name="Shimosaka M."/>
            <person name="Okazaki M."/>
        </authorList>
    </citation>
    <scope>FUNCTION</scope>
    <scope>CATALYTIC ACTIVITY</scope>
    <scope>BIOPHYSICOCHEMICAL PROPERTIES</scope>
    <source>
        <strain>IAM2660</strain>
    </source>
</reference>
<gene>
    <name type="primary">csnC</name>
</gene>
<protein>
    <recommendedName>
        <fullName>Endo-chitosanase C</fullName>
        <ecNumber>3.2.1.132</ecNumber>
    </recommendedName>
</protein>